<name>FGF18_BOVIN</name>
<protein>
    <recommendedName>
        <fullName>Fibroblast growth factor 18</fullName>
        <shortName>FGF-18</shortName>
    </recommendedName>
    <alternativeName>
        <fullName>zFGF5</fullName>
    </alternativeName>
</protein>
<organism>
    <name type="scientific">Bos taurus</name>
    <name type="common">Bovine</name>
    <dbReference type="NCBI Taxonomy" id="9913"/>
    <lineage>
        <taxon>Eukaryota</taxon>
        <taxon>Metazoa</taxon>
        <taxon>Chordata</taxon>
        <taxon>Craniata</taxon>
        <taxon>Vertebrata</taxon>
        <taxon>Euteleostomi</taxon>
        <taxon>Mammalia</taxon>
        <taxon>Eutheria</taxon>
        <taxon>Laurasiatheria</taxon>
        <taxon>Artiodactyla</taxon>
        <taxon>Ruminantia</taxon>
        <taxon>Pecora</taxon>
        <taxon>Bovidae</taxon>
        <taxon>Bovinae</taxon>
        <taxon>Bos</taxon>
    </lineage>
</organism>
<feature type="signal peptide" evidence="2">
    <location>
        <begin position="1"/>
        <end position="27"/>
    </location>
</feature>
<feature type="chain" id="PRO_0000279865" description="Fibroblast growth factor 18">
    <location>
        <begin position="28"/>
        <end position="207"/>
    </location>
</feature>
<feature type="glycosylation site" description="N-linked (GlcNAc...) asparagine" evidence="2">
    <location>
        <position position="39"/>
    </location>
</feature>
<feature type="glycosylation site" description="N-linked (GlcNAc...) asparagine" evidence="2">
    <location>
        <position position="137"/>
    </location>
</feature>
<feature type="disulfide bond" evidence="1">
    <location>
        <begin position="109"/>
        <end position="127"/>
    </location>
</feature>
<comment type="function">
    <text evidence="1">Plays an important role in the regulation of cell proliferation, cell differentiation and cell migration. Required for normal ossification and bone development. Stimulates hepatic and intestinal proliferation (By similarity).</text>
</comment>
<comment type="subunit">
    <text evidence="1">Interacts with FGFR3 and FGFR4.</text>
</comment>
<comment type="subcellular location">
    <subcellularLocation>
        <location evidence="1">Secreted</location>
    </subcellularLocation>
</comment>
<comment type="similarity">
    <text evidence="3">Belongs to the heparin-binding growth factors family.</text>
</comment>
<reference key="1">
    <citation type="submission" date="2006-08" db="EMBL/GenBank/DDBJ databases">
        <authorList>
            <consortium name="NIH - Mammalian Gene Collection (MGC) project"/>
        </authorList>
    </citation>
    <scope>NUCLEOTIDE SEQUENCE [LARGE SCALE MRNA]</scope>
    <source>
        <strain>Hereford</strain>
        <tissue>Fetal lung</tissue>
    </source>
</reference>
<keyword id="KW-1015">Disulfide bond</keyword>
<keyword id="KW-0325">Glycoprotein</keyword>
<keyword id="KW-0339">Growth factor</keyword>
<keyword id="KW-1185">Reference proteome</keyword>
<keyword id="KW-0964">Secreted</keyword>
<keyword id="KW-0732">Signal</keyword>
<evidence type="ECO:0000250" key="1"/>
<evidence type="ECO:0000255" key="2"/>
<evidence type="ECO:0000305" key="3"/>
<sequence length="207" mass="23951">MYSAPSTCTCLCLHFLLLCFQVQVLAAEENVDFRIHVENQTRARDDVSRKQLRLYQLYSRTSGKHIQVLGRRISARGEDGDKYAQLLVETDTFGSQVRIKGKETEFYLCMNRKGKLVGKPDGTSKECVFIEKVLENNYTALMSAKYSGWYVGFTKKGRPRKGPKTRENQQDVHFMKRYPKGQAELQKPFKYTTVTKRSRRIRPTHPG</sequence>
<gene>
    <name type="primary">FGF18</name>
</gene>
<dbReference type="EMBL" id="BC120280">
    <property type="protein sequence ID" value="AAI20281.1"/>
    <property type="molecule type" value="mRNA"/>
</dbReference>
<dbReference type="RefSeq" id="NP_001069475.1">
    <property type="nucleotide sequence ID" value="NM_001076007.2"/>
</dbReference>
<dbReference type="SMR" id="Q0VCA0"/>
<dbReference type="FunCoup" id="Q0VCA0">
    <property type="interactions" value="395"/>
</dbReference>
<dbReference type="STRING" id="9913.ENSBTAP00000000139"/>
<dbReference type="GlyCosmos" id="Q0VCA0">
    <property type="glycosylation" value="2 sites, No reported glycans"/>
</dbReference>
<dbReference type="GlyGen" id="Q0VCA0">
    <property type="glycosylation" value="2 sites"/>
</dbReference>
<dbReference type="PaxDb" id="9913-ENSBTAP00000000139"/>
<dbReference type="GeneID" id="533929"/>
<dbReference type="KEGG" id="bta:533929"/>
<dbReference type="CTD" id="8817"/>
<dbReference type="eggNOG" id="KOG3885">
    <property type="taxonomic scope" value="Eukaryota"/>
</dbReference>
<dbReference type="InParanoid" id="Q0VCA0"/>
<dbReference type="OrthoDB" id="5988014at2759"/>
<dbReference type="Proteomes" id="UP000009136">
    <property type="component" value="Unplaced"/>
</dbReference>
<dbReference type="GO" id="GO:0005737">
    <property type="term" value="C:cytoplasm"/>
    <property type="evidence" value="ECO:0000318"/>
    <property type="project" value="GO_Central"/>
</dbReference>
<dbReference type="GO" id="GO:0005615">
    <property type="term" value="C:extracellular space"/>
    <property type="evidence" value="ECO:0000318"/>
    <property type="project" value="GO_Central"/>
</dbReference>
<dbReference type="GO" id="GO:0008083">
    <property type="term" value="F:growth factor activity"/>
    <property type="evidence" value="ECO:0000318"/>
    <property type="project" value="GO_Central"/>
</dbReference>
<dbReference type="GO" id="GO:0005105">
    <property type="term" value="F:type 1 fibroblast growth factor receptor binding"/>
    <property type="evidence" value="ECO:0000318"/>
    <property type="project" value="GO_Central"/>
</dbReference>
<dbReference type="GO" id="GO:0005111">
    <property type="term" value="F:type 2 fibroblast growth factor receptor binding"/>
    <property type="evidence" value="ECO:0000318"/>
    <property type="project" value="GO_Central"/>
</dbReference>
<dbReference type="GO" id="GO:0008543">
    <property type="term" value="P:fibroblast growth factor receptor signaling pathway"/>
    <property type="evidence" value="ECO:0000318"/>
    <property type="project" value="GO_Central"/>
</dbReference>
<dbReference type="GO" id="GO:0022008">
    <property type="term" value="P:neurogenesis"/>
    <property type="evidence" value="ECO:0000318"/>
    <property type="project" value="GO_Central"/>
</dbReference>
<dbReference type="GO" id="GO:0008284">
    <property type="term" value="P:positive regulation of cell population proliferation"/>
    <property type="evidence" value="ECO:0000318"/>
    <property type="project" value="GO_Central"/>
</dbReference>
<dbReference type="GO" id="GO:0043410">
    <property type="term" value="P:positive regulation of MAPK cascade"/>
    <property type="evidence" value="ECO:0000318"/>
    <property type="project" value="GO_Central"/>
</dbReference>
<dbReference type="GO" id="GO:0030334">
    <property type="term" value="P:regulation of cell migration"/>
    <property type="evidence" value="ECO:0000318"/>
    <property type="project" value="GO_Central"/>
</dbReference>
<dbReference type="CDD" id="cd23324">
    <property type="entry name" value="beta-trefoil_FGF18"/>
    <property type="match status" value="1"/>
</dbReference>
<dbReference type="FunFam" id="2.80.10.50:FF:000007">
    <property type="entry name" value="Fibroblast growth factor"/>
    <property type="match status" value="1"/>
</dbReference>
<dbReference type="Gene3D" id="2.80.10.50">
    <property type="match status" value="1"/>
</dbReference>
<dbReference type="InterPro" id="IPR002209">
    <property type="entry name" value="Fibroblast_GF_fam"/>
</dbReference>
<dbReference type="InterPro" id="IPR008996">
    <property type="entry name" value="IL1/FGF"/>
</dbReference>
<dbReference type="PANTHER" id="PTHR11486">
    <property type="entry name" value="FIBROBLAST GROWTH FACTOR"/>
    <property type="match status" value="1"/>
</dbReference>
<dbReference type="Pfam" id="PF00167">
    <property type="entry name" value="FGF"/>
    <property type="match status" value="1"/>
</dbReference>
<dbReference type="PRINTS" id="PR00262">
    <property type="entry name" value="IL1HBGF"/>
</dbReference>
<dbReference type="SMART" id="SM00442">
    <property type="entry name" value="FGF"/>
    <property type="match status" value="1"/>
</dbReference>
<dbReference type="SUPFAM" id="SSF50353">
    <property type="entry name" value="Cytokine"/>
    <property type="match status" value="1"/>
</dbReference>
<dbReference type="PROSITE" id="PS00247">
    <property type="entry name" value="HBGF_FGF"/>
    <property type="match status" value="1"/>
</dbReference>
<proteinExistence type="evidence at transcript level"/>
<accession>Q0VCA0</accession>